<accession>Q7VA26</accession>
<dbReference type="EC" id="1.1.1.23" evidence="1"/>
<dbReference type="EMBL" id="AE017126">
    <property type="protein sequence ID" value="AAQ00687.1"/>
    <property type="molecule type" value="Genomic_DNA"/>
</dbReference>
<dbReference type="RefSeq" id="NP_876034.1">
    <property type="nucleotide sequence ID" value="NC_005042.1"/>
</dbReference>
<dbReference type="RefSeq" id="WP_011125793.1">
    <property type="nucleotide sequence ID" value="NC_005042.1"/>
</dbReference>
<dbReference type="SMR" id="Q7VA26"/>
<dbReference type="STRING" id="167539.Pro_1643"/>
<dbReference type="EnsemblBacteria" id="AAQ00687">
    <property type="protein sequence ID" value="AAQ00687"/>
    <property type="gene ID" value="Pro_1643"/>
</dbReference>
<dbReference type="KEGG" id="pma:Pro_1643"/>
<dbReference type="PATRIC" id="fig|167539.5.peg.1738"/>
<dbReference type="eggNOG" id="COG0141">
    <property type="taxonomic scope" value="Bacteria"/>
</dbReference>
<dbReference type="HOGENOM" id="CLU_006732_3_3_3"/>
<dbReference type="OrthoDB" id="9805269at2"/>
<dbReference type="UniPathway" id="UPA00031">
    <property type="reaction ID" value="UER00014"/>
</dbReference>
<dbReference type="Proteomes" id="UP000001420">
    <property type="component" value="Chromosome"/>
</dbReference>
<dbReference type="GO" id="GO:0005829">
    <property type="term" value="C:cytosol"/>
    <property type="evidence" value="ECO:0007669"/>
    <property type="project" value="TreeGrafter"/>
</dbReference>
<dbReference type="GO" id="GO:0004399">
    <property type="term" value="F:histidinol dehydrogenase activity"/>
    <property type="evidence" value="ECO:0007669"/>
    <property type="project" value="UniProtKB-UniRule"/>
</dbReference>
<dbReference type="GO" id="GO:0051287">
    <property type="term" value="F:NAD binding"/>
    <property type="evidence" value="ECO:0007669"/>
    <property type="project" value="InterPro"/>
</dbReference>
<dbReference type="GO" id="GO:0008270">
    <property type="term" value="F:zinc ion binding"/>
    <property type="evidence" value="ECO:0007669"/>
    <property type="project" value="UniProtKB-UniRule"/>
</dbReference>
<dbReference type="GO" id="GO:0000105">
    <property type="term" value="P:L-histidine biosynthetic process"/>
    <property type="evidence" value="ECO:0007669"/>
    <property type="project" value="UniProtKB-UniRule"/>
</dbReference>
<dbReference type="CDD" id="cd06572">
    <property type="entry name" value="Histidinol_dh"/>
    <property type="match status" value="1"/>
</dbReference>
<dbReference type="FunFam" id="3.40.50.1980:FF:000001">
    <property type="entry name" value="Histidinol dehydrogenase"/>
    <property type="match status" value="1"/>
</dbReference>
<dbReference type="FunFam" id="3.40.50.1980:FF:000026">
    <property type="entry name" value="Histidinol dehydrogenase"/>
    <property type="match status" value="1"/>
</dbReference>
<dbReference type="Gene3D" id="1.20.5.1300">
    <property type="match status" value="1"/>
</dbReference>
<dbReference type="Gene3D" id="3.40.50.1980">
    <property type="entry name" value="Nitrogenase molybdenum iron protein domain"/>
    <property type="match status" value="2"/>
</dbReference>
<dbReference type="HAMAP" id="MF_01024">
    <property type="entry name" value="HisD"/>
    <property type="match status" value="1"/>
</dbReference>
<dbReference type="InterPro" id="IPR016161">
    <property type="entry name" value="Ald_DH/histidinol_DH"/>
</dbReference>
<dbReference type="InterPro" id="IPR001692">
    <property type="entry name" value="Histidinol_DH_CS"/>
</dbReference>
<dbReference type="InterPro" id="IPR022695">
    <property type="entry name" value="Histidinol_DH_monofunct"/>
</dbReference>
<dbReference type="InterPro" id="IPR012131">
    <property type="entry name" value="Hstdl_DH"/>
</dbReference>
<dbReference type="NCBIfam" id="TIGR00069">
    <property type="entry name" value="hisD"/>
    <property type="match status" value="1"/>
</dbReference>
<dbReference type="PANTHER" id="PTHR21256:SF2">
    <property type="entry name" value="HISTIDINE BIOSYNTHESIS TRIFUNCTIONAL PROTEIN"/>
    <property type="match status" value="1"/>
</dbReference>
<dbReference type="PANTHER" id="PTHR21256">
    <property type="entry name" value="HISTIDINOL DEHYDROGENASE HDH"/>
    <property type="match status" value="1"/>
</dbReference>
<dbReference type="Pfam" id="PF00815">
    <property type="entry name" value="Histidinol_dh"/>
    <property type="match status" value="1"/>
</dbReference>
<dbReference type="PIRSF" id="PIRSF000099">
    <property type="entry name" value="Histidinol_dh"/>
    <property type="match status" value="1"/>
</dbReference>
<dbReference type="PRINTS" id="PR00083">
    <property type="entry name" value="HOLDHDRGNASE"/>
</dbReference>
<dbReference type="SUPFAM" id="SSF53720">
    <property type="entry name" value="ALDH-like"/>
    <property type="match status" value="1"/>
</dbReference>
<dbReference type="PROSITE" id="PS00611">
    <property type="entry name" value="HISOL_DEHYDROGENASE"/>
    <property type="match status" value="1"/>
</dbReference>
<gene>
    <name evidence="1" type="primary">hisD</name>
    <name type="ordered locus">Pro_1643</name>
</gene>
<proteinExistence type="inferred from homology"/>
<sequence>MSERKQILNCIDDPQQALIMLKRISARTSLEVQENAISSVQNILTEVKQLGDEALFRLTEKFDGFIPKPLEITPEQTLEAWEKTPTPLQEALQLAKNRIEAFHKYQIPKDFLKEGIHGELLGKNWSPVEKAGIYIPGGRAAYPSTVLMNAVPALVAGVNEIIMVSPAGPNGQLNRTVLAAAYIAGIKKIFRIGGAQAIGALSYGTQTIPRVDVISGPGNLYVTLAKKLVYGQVGIDSLAGPSEVLIIADHSADVEQVATDLLAQAEHDPLAASILLTTESNLAKKINLEIENQLKDHPRSAICRKSLKDWGLIVICKDIKSCAALSNSFAPEHLELLIEKPFEFISQIKNAGAIFLGEWSPEATGDYLAGPNHTLPTSGTARFSSALSVETFMKSTSIINFNQAALNKTSAAIMELANSEGLHSHSRSIEIRRSKPSSDD</sequence>
<protein>
    <recommendedName>
        <fullName evidence="1">Histidinol dehydrogenase</fullName>
        <shortName evidence="1">HDH</shortName>
        <ecNumber evidence="1">1.1.1.23</ecNumber>
    </recommendedName>
</protein>
<evidence type="ECO:0000255" key="1">
    <source>
        <dbReference type="HAMAP-Rule" id="MF_01024"/>
    </source>
</evidence>
<feature type="chain" id="PRO_0000135813" description="Histidinol dehydrogenase">
    <location>
        <begin position="1"/>
        <end position="440"/>
    </location>
</feature>
<feature type="active site" description="Proton acceptor" evidence="1">
    <location>
        <position position="332"/>
    </location>
</feature>
<feature type="active site" description="Proton acceptor" evidence="1">
    <location>
        <position position="333"/>
    </location>
</feature>
<feature type="binding site" evidence="1">
    <location>
        <position position="134"/>
    </location>
    <ligand>
        <name>NAD(+)</name>
        <dbReference type="ChEBI" id="CHEBI:57540"/>
    </ligand>
</feature>
<feature type="binding site" evidence="1">
    <location>
        <position position="196"/>
    </location>
    <ligand>
        <name>NAD(+)</name>
        <dbReference type="ChEBI" id="CHEBI:57540"/>
    </ligand>
</feature>
<feature type="binding site" evidence="1">
    <location>
        <position position="219"/>
    </location>
    <ligand>
        <name>NAD(+)</name>
        <dbReference type="ChEBI" id="CHEBI:57540"/>
    </ligand>
</feature>
<feature type="binding site" evidence="1">
    <location>
        <position position="242"/>
    </location>
    <ligand>
        <name>substrate</name>
    </ligand>
</feature>
<feature type="binding site" evidence="1">
    <location>
        <position position="264"/>
    </location>
    <ligand>
        <name>substrate</name>
    </ligand>
</feature>
<feature type="binding site" evidence="1">
    <location>
        <position position="264"/>
    </location>
    <ligand>
        <name>Zn(2+)</name>
        <dbReference type="ChEBI" id="CHEBI:29105"/>
    </ligand>
</feature>
<feature type="binding site" evidence="1">
    <location>
        <position position="267"/>
    </location>
    <ligand>
        <name>substrate</name>
    </ligand>
</feature>
<feature type="binding site" evidence="1">
    <location>
        <position position="267"/>
    </location>
    <ligand>
        <name>Zn(2+)</name>
        <dbReference type="ChEBI" id="CHEBI:29105"/>
    </ligand>
</feature>
<feature type="binding site" evidence="1">
    <location>
        <position position="333"/>
    </location>
    <ligand>
        <name>substrate</name>
    </ligand>
</feature>
<feature type="binding site" evidence="1">
    <location>
        <position position="366"/>
    </location>
    <ligand>
        <name>substrate</name>
    </ligand>
</feature>
<feature type="binding site" evidence="1">
    <location>
        <position position="366"/>
    </location>
    <ligand>
        <name>Zn(2+)</name>
        <dbReference type="ChEBI" id="CHEBI:29105"/>
    </ligand>
</feature>
<feature type="binding site" evidence="1">
    <location>
        <position position="420"/>
    </location>
    <ligand>
        <name>substrate</name>
    </ligand>
</feature>
<feature type="binding site" evidence="1">
    <location>
        <position position="425"/>
    </location>
    <ligand>
        <name>substrate</name>
    </ligand>
</feature>
<feature type="binding site" evidence="1">
    <location>
        <position position="425"/>
    </location>
    <ligand>
        <name>Zn(2+)</name>
        <dbReference type="ChEBI" id="CHEBI:29105"/>
    </ligand>
</feature>
<comment type="function">
    <text evidence="1">Catalyzes the sequential NAD-dependent oxidations of L-histidinol to L-histidinaldehyde and then to L-histidine.</text>
</comment>
<comment type="catalytic activity">
    <reaction evidence="1">
        <text>L-histidinol + 2 NAD(+) + H2O = L-histidine + 2 NADH + 3 H(+)</text>
        <dbReference type="Rhea" id="RHEA:20641"/>
        <dbReference type="ChEBI" id="CHEBI:15377"/>
        <dbReference type="ChEBI" id="CHEBI:15378"/>
        <dbReference type="ChEBI" id="CHEBI:57540"/>
        <dbReference type="ChEBI" id="CHEBI:57595"/>
        <dbReference type="ChEBI" id="CHEBI:57699"/>
        <dbReference type="ChEBI" id="CHEBI:57945"/>
        <dbReference type="EC" id="1.1.1.23"/>
    </reaction>
</comment>
<comment type="cofactor">
    <cofactor evidence="1">
        <name>Zn(2+)</name>
        <dbReference type="ChEBI" id="CHEBI:29105"/>
    </cofactor>
    <text evidence="1">Binds 1 zinc ion per subunit.</text>
</comment>
<comment type="pathway">
    <text evidence="1">Amino-acid biosynthesis; L-histidine biosynthesis; L-histidine from 5-phospho-alpha-D-ribose 1-diphosphate: step 9/9.</text>
</comment>
<comment type="similarity">
    <text evidence="1">Belongs to the histidinol dehydrogenase family.</text>
</comment>
<keyword id="KW-0028">Amino-acid biosynthesis</keyword>
<keyword id="KW-0368">Histidine biosynthesis</keyword>
<keyword id="KW-0479">Metal-binding</keyword>
<keyword id="KW-0520">NAD</keyword>
<keyword id="KW-0560">Oxidoreductase</keyword>
<keyword id="KW-1185">Reference proteome</keyword>
<keyword id="KW-0862">Zinc</keyword>
<reference key="1">
    <citation type="journal article" date="2003" name="Proc. Natl. Acad. Sci. U.S.A.">
        <title>Genome sequence of the cyanobacterium Prochlorococcus marinus SS120, a nearly minimal oxyphototrophic genome.</title>
        <authorList>
            <person name="Dufresne A."/>
            <person name="Salanoubat M."/>
            <person name="Partensky F."/>
            <person name="Artiguenave F."/>
            <person name="Axmann I.M."/>
            <person name="Barbe V."/>
            <person name="Duprat S."/>
            <person name="Galperin M.Y."/>
            <person name="Koonin E.V."/>
            <person name="Le Gall F."/>
            <person name="Makarova K.S."/>
            <person name="Ostrowski M."/>
            <person name="Oztas S."/>
            <person name="Robert C."/>
            <person name="Rogozin I.B."/>
            <person name="Scanlan D.J."/>
            <person name="Tandeau de Marsac N."/>
            <person name="Weissenbach J."/>
            <person name="Wincker P."/>
            <person name="Wolf Y.I."/>
            <person name="Hess W.R."/>
        </authorList>
    </citation>
    <scope>NUCLEOTIDE SEQUENCE [LARGE SCALE GENOMIC DNA]</scope>
    <source>
        <strain>SARG / CCMP1375 / SS120</strain>
    </source>
</reference>
<name>HISX_PROMA</name>
<organism>
    <name type="scientific">Prochlorococcus marinus (strain SARG / CCMP1375 / SS120)</name>
    <dbReference type="NCBI Taxonomy" id="167539"/>
    <lineage>
        <taxon>Bacteria</taxon>
        <taxon>Bacillati</taxon>
        <taxon>Cyanobacteriota</taxon>
        <taxon>Cyanophyceae</taxon>
        <taxon>Synechococcales</taxon>
        <taxon>Prochlorococcaceae</taxon>
        <taxon>Prochlorococcus</taxon>
    </lineage>
</organism>